<dbReference type="EC" id="2.1.1.199" evidence="1"/>
<dbReference type="EMBL" id="CP001635">
    <property type="protein sequence ID" value="ACS17562.1"/>
    <property type="molecule type" value="Genomic_DNA"/>
</dbReference>
<dbReference type="SMR" id="C5CNE6"/>
<dbReference type="STRING" id="543728.Vapar_0911"/>
<dbReference type="KEGG" id="vap:Vapar_0911"/>
<dbReference type="eggNOG" id="COG0275">
    <property type="taxonomic scope" value="Bacteria"/>
</dbReference>
<dbReference type="HOGENOM" id="CLU_038422_2_0_4"/>
<dbReference type="OrthoDB" id="9806637at2"/>
<dbReference type="GO" id="GO:0005737">
    <property type="term" value="C:cytoplasm"/>
    <property type="evidence" value="ECO:0007669"/>
    <property type="project" value="UniProtKB-SubCell"/>
</dbReference>
<dbReference type="GO" id="GO:0071424">
    <property type="term" value="F:rRNA (cytosine-N4-)-methyltransferase activity"/>
    <property type="evidence" value="ECO:0007669"/>
    <property type="project" value="UniProtKB-UniRule"/>
</dbReference>
<dbReference type="GO" id="GO:0070475">
    <property type="term" value="P:rRNA base methylation"/>
    <property type="evidence" value="ECO:0007669"/>
    <property type="project" value="UniProtKB-UniRule"/>
</dbReference>
<dbReference type="Gene3D" id="1.10.150.170">
    <property type="entry name" value="Putative methyltransferase TM0872, insert domain"/>
    <property type="match status" value="1"/>
</dbReference>
<dbReference type="Gene3D" id="3.40.50.150">
    <property type="entry name" value="Vaccinia Virus protein VP39"/>
    <property type="match status" value="1"/>
</dbReference>
<dbReference type="HAMAP" id="MF_01007">
    <property type="entry name" value="16SrRNA_methyltr_H"/>
    <property type="match status" value="1"/>
</dbReference>
<dbReference type="InterPro" id="IPR002903">
    <property type="entry name" value="RsmH"/>
</dbReference>
<dbReference type="InterPro" id="IPR023397">
    <property type="entry name" value="SAM-dep_MeTrfase_MraW_recog"/>
</dbReference>
<dbReference type="InterPro" id="IPR029063">
    <property type="entry name" value="SAM-dependent_MTases_sf"/>
</dbReference>
<dbReference type="NCBIfam" id="TIGR00006">
    <property type="entry name" value="16S rRNA (cytosine(1402)-N(4))-methyltransferase RsmH"/>
    <property type="match status" value="1"/>
</dbReference>
<dbReference type="PANTHER" id="PTHR11265:SF0">
    <property type="entry name" value="12S RRNA N4-METHYLCYTIDINE METHYLTRANSFERASE"/>
    <property type="match status" value="1"/>
</dbReference>
<dbReference type="PANTHER" id="PTHR11265">
    <property type="entry name" value="S-ADENOSYL-METHYLTRANSFERASE MRAW"/>
    <property type="match status" value="1"/>
</dbReference>
<dbReference type="Pfam" id="PF01795">
    <property type="entry name" value="Methyltransf_5"/>
    <property type="match status" value="1"/>
</dbReference>
<dbReference type="PIRSF" id="PIRSF004486">
    <property type="entry name" value="MraW"/>
    <property type="match status" value="1"/>
</dbReference>
<dbReference type="SUPFAM" id="SSF81799">
    <property type="entry name" value="Putative methyltransferase TM0872, insert domain"/>
    <property type="match status" value="1"/>
</dbReference>
<dbReference type="SUPFAM" id="SSF53335">
    <property type="entry name" value="S-adenosyl-L-methionine-dependent methyltransferases"/>
    <property type="match status" value="1"/>
</dbReference>
<gene>
    <name evidence="1" type="primary">rsmH</name>
    <name type="synonym">mraW</name>
    <name type="ordered locus">Vapar_0911</name>
</gene>
<name>RSMH_VARPS</name>
<reference key="1">
    <citation type="journal article" date="2011" name="J. Bacteriol.">
        <title>Complete genome sequence of the metabolically versatile plant growth-promoting endophyte, Variovorax paradoxus S110.</title>
        <authorList>
            <person name="Han J.I."/>
            <person name="Choi H.K."/>
            <person name="Lee S.W."/>
            <person name="Orwin P.M."/>
            <person name="Kim J."/>
            <person name="Laroe S.L."/>
            <person name="Kim T.G."/>
            <person name="O'Neil J."/>
            <person name="Leadbetter J.R."/>
            <person name="Lee S.Y."/>
            <person name="Hur C.G."/>
            <person name="Spain J.C."/>
            <person name="Ovchinnikova G."/>
            <person name="Goodwin L."/>
            <person name="Han C."/>
        </authorList>
    </citation>
    <scope>NUCLEOTIDE SEQUENCE [LARGE SCALE GENOMIC DNA]</scope>
    <source>
        <strain>S110</strain>
    </source>
</reference>
<sequence>MNTPWTHTTVLLNEAVEALLSGSTAATGTYVDATFGRGGHARAILARLAPEGRLIAFDKDAEAVAEAARISDARFSIRHQGFRSLGELPDASVAGVLMDLGVSSPQIDNPVRGFSFRFDGPLDMRMDTTRGESVADWLATAELQQIAEVIRDYGEERFAVQIAKAIVARRQERGAISTTSELAELVAGTVKTREPGQNPATRTFQAFRIFINAELEELQQALEASLSVLQPGGRLAVISFHSLEDRIVKQFIARHSKEVYDRRAPFAAPKAMKLRALERIKPSDAEVHGNPRSRSAILRVAERTQEV</sequence>
<evidence type="ECO:0000255" key="1">
    <source>
        <dbReference type="HAMAP-Rule" id="MF_01007"/>
    </source>
</evidence>
<keyword id="KW-0963">Cytoplasm</keyword>
<keyword id="KW-0489">Methyltransferase</keyword>
<keyword id="KW-0698">rRNA processing</keyword>
<keyword id="KW-0949">S-adenosyl-L-methionine</keyword>
<keyword id="KW-0808">Transferase</keyword>
<protein>
    <recommendedName>
        <fullName evidence="1">Ribosomal RNA small subunit methyltransferase H</fullName>
        <ecNumber evidence="1">2.1.1.199</ecNumber>
    </recommendedName>
    <alternativeName>
        <fullName evidence="1">16S rRNA m(4)C1402 methyltransferase</fullName>
    </alternativeName>
    <alternativeName>
        <fullName evidence="1">rRNA (cytosine-N(4)-)-methyltransferase RsmH</fullName>
    </alternativeName>
</protein>
<organism>
    <name type="scientific">Variovorax paradoxus (strain S110)</name>
    <dbReference type="NCBI Taxonomy" id="543728"/>
    <lineage>
        <taxon>Bacteria</taxon>
        <taxon>Pseudomonadati</taxon>
        <taxon>Pseudomonadota</taxon>
        <taxon>Betaproteobacteria</taxon>
        <taxon>Burkholderiales</taxon>
        <taxon>Comamonadaceae</taxon>
        <taxon>Variovorax</taxon>
    </lineage>
</organism>
<feature type="chain" id="PRO_0000387205" description="Ribosomal RNA small subunit methyltransferase H">
    <location>
        <begin position="1"/>
        <end position="307"/>
    </location>
</feature>
<feature type="binding site" evidence="1">
    <location>
        <begin position="38"/>
        <end position="40"/>
    </location>
    <ligand>
        <name>S-adenosyl-L-methionine</name>
        <dbReference type="ChEBI" id="CHEBI:59789"/>
    </ligand>
</feature>
<feature type="binding site" evidence="1">
    <location>
        <position position="58"/>
    </location>
    <ligand>
        <name>S-adenosyl-L-methionine</name>
        <dbReference type="ChEBI" id="CHEBI:59789"/>
    </ligand>
</feature>
<feature type="binding site" evidence="1">
    <location>
        <position position="82"/>
    </location>
    <ligand>
        <name>S-adenosyl-L-methionine</name>
        <dbReference type="ChEBI" id="CHEBI:59789"/>
    </ligand>
</feature>
<feature type="binding site" evidence="1">
    <location>
        <position position="99"/>
    </location>
    <ligand>
        <name>S-adenosyl-L-methionine</name>
        <dbReference type="ChEBI" id="CHEBI:59789"/>
    </ligand>
</feature>
<feature type="binding site" evidence="1">
    <location>
        <position position="106"/>
    </location>
    <ligand>
        <name>S-adenosyl-L-methionine</name>
        <dbReference type="ChEBI" id="CHEBI:59789"/>
    </ligand>
</feature>
<comment type="function">
    <text evidence="1">Specifically methylates the N4 position of cytidine in position 1402 (C1402) of 16S rRNA.</text>
</comment>
<comment type="catalytic activity">
    <reaction evidence="1">
        <text>cytidine(1402) in 16S rRNA + S-adenosyl-L-methionine = N(4)-methylcytidine(1402) in 16S rRNA + S-adenosyl-L-homocysteine + H(+)</text>
        <dbReference type="Rhea" id="RHEA:42928"/>
        <dbReference type="Rhea" id="RHEA-COMP:10286"/>
        <dbReference type="Rhea" id="RHEA-COMP:10287"/>
        <dbReference type="ChEBI" id="CHEBI:15378"/>
        <dbReference type="ChEBI" id="CHEBI:57856"/>
        <dbReference type="ChEBI" id="CHEBI:59789"/>
        <dbReference type="ChEBI" id="CHEBI:74506"/>
        <dbReference type="ChEBI" id="CHEBI:82748"/>
        <dbReference type="EC" id="2.1.1.199"/>
    </reaction>
</comment>
<comment type="subcellular location">
    <subcellularLocation>
        <location evidence="1">Cytoplasm</location>
    </subcellularLocation>
</comment>
<comment type="similarity">
    <text evidence="1">Belongs to the methyltransferase superfamily. RsmH family.</text>
</comment>
<accession>C5CNE6</accession>
<proteinExistence type="inferred from homology"/>